<proteinExistence type="inferred from homology"/>
<organism>
    <name type="scientific">Yersinia pseudotuberculosis serotype IB (strain PB1/+)</name>
    <dbReference type="NCBI Taxonomy" id="502801"/>
    <lineage>
        <taxon>Bacteria</taxon>
        <taxon>Pseudomonadati</taxon>
        <taxon>Pseudomonadota</taxon>
        <taxon>Gammaproteobacteria</taxon>
        <taxon>Enterobacterales</taxon>
        <taxon>Yersiniaceae</taxon>
        <taxon>Yersinia</taxon>
    </lineage>
</organism>
<name>Y2141_YERPB</name>
<reference key="1">
    <citation type="submission" date="2008-04" db="EMBL/GenBank/DDBJ databases">
        <title>Complete sequence of Yersinia pseudotuberculosis PB1/+.</title>
        <authorList>
            <person name="Copeland A."/>
            <person name="Lucas S."/>
            <person name="Lapidus A."/>
            <person name="Glavina del Rio T."/>
            <person name="Dalin E."/>
            <person name="Tice H."/>
            <person name="Bruce D."/>
            <person name="Goodwin L."/>
            <person name="Pitluck S."/>
            <person name="Munk A.C."/>
            <person name="Brettin T."/>
            <person name="Detter J.C."/>
            <person name="Han C."/>
            <person name="Tapia R."/>
            <person name="Schmutz J."/>
            <person name="Larimer F."/>
            <person name="Land M."/>
            <person name="Hauser L."/>
            <person name="Challacombe J.F."/>
            <person name="Green L."/>
            <person name="Lindler L.E."/>
            <person name="Nikolich M.P."/>
            <person name="Richardson P."/>
        </authorList>
    </citation>
    <scope>NUCLEOTIDE SEQUENCE [LARGE SCALE GENOMIC DNA]</scope>
    <source>
        <strain>PB1/+</strain>
    </source>
</reference>
<accession>B2K3Q8</accession>
<dbReference type="EMBL" id="CP001048">
    <property type="protein sequence ID" value="ACC89104.1"/>
    <property type="molecule type" value="Genomic_DNA"/>
</dbReference>
<dbReference type="RefSeq" id="WP_002216501.1">
    <property type="nucleotide sequence ID" value="NZ_CP009780.1"/>
</dbReference>
<dbReference type="SMR" id="B2K3Q8"/>
<dbReference type="KEGG" id="ypb:YPTS_2141"/>
<dbReference type="PATRIC" id="fig|502801.10.peg.1531"/>
<dbReference type="HAMAP" id="MF_01232">
    <property type="entry name" value="UPF0229"/>
    <property type="match status" value="1"/>
</dbReference>
<dbReference type="InterPro" id="IPR006698">
    <property type="entry name" value="UPF0229"/>
</dbReference>
<dbReference type="NCBIfam" id="NF003707">
    <property type="entry name" value="PRK05325.1-2"/>
    <property type="match status" value="1"/>
</dbReference>
<dbReference type="NCBIfam" id="NF003708">
    <property type="entry name" value="PRK05325.1-3"/>
    <property type="match status" value="1"/>
</dbReference>
<dbReference type="PANTHER" id="PTHR30510">
    <property type="entry name" value="UPF0229 PROTEIN YEAH"/>
    <property type="match status" value="1"/>
</dbReference>
<dbReference type="PANTHER" id="PTHR30510:SF2">
    <property type="entry name" value="UPF0229 PROTEIN YEAH"/>
    <property type="match status" value="1"/>
</dbReference>
<dbReference type="Pfam" id="PF04285">
    <property type="entry name" value="DUF444"/>
    <property type="match status" value="1"/>
</dbReference>
<gene>
    <name type="ordered locus">YPTS_2141</name>
</gene>
<protein>
    <recommendedName>
        <fullName evidence="1">UPF0229 protein YPTS_2141</fullName>
    </recommendedName>
</protein>
<comment type="similarity">
    <text evidence="1">Belongs to the UPF0229 family.</text>
</comment>
<evidence type="ECO:0000255" key="1">
    <source>
        <dbReference type="HAMAP-Rule" id="MF_01232"/>
    </source>
</evidence>
<evidence type="ECO:0000256" key="2">
    <source>
        <dbReference type="SAM" id="MobiDB-lite"/>
    </source>
</evidence>
<feature type="chain" id="PRO_1000139660" description="UPF0229 protein YPTS_2141">
    <location>
        <begin position="1"/>
        <end position="424"/>
    </location>
</feature>
<feature type="region of interest" description="Disordered" evidence="2">
    <location>
        <begin position="84"/>
        <end position="109"/>
    </location>
</feature>
<feature type="compositionally biased region" description="Gly residues" evidence="2">
    <location>
        <begin position="92"/>
        <end position="105"/>
    </location>
</feature>
<sequence length="424" mass="49080">MGYFIDRRLNGKNKSMVNRQRFLRRYKSQIKQSIADAINKRSVTDIESGESVSIPIDDINEPMFHQGNGGLRHRVHPGNDHFITNDRVDRPQGGGGGGSGQGNAGKDGEGEDEFVFQISKDEYLDLLFEDLALPNLKRNQYKQLAEFKTHRAGYTSNGVPANISVVRSLQNSLARRTAMTASKRRELRELEAALTVLENSEPAQLLEEERLRKAITELKQKIARVPFIDTFDLRYKNYERRPEPSSQAVMFCLMDVSGSMDQATKDMAKRFYILLYLFLSRTYKNVDVVYIRHHTQAKEVDEQEFFYSQETGGTIVSSALKLMDEVVQERYNPAQWNIYAAQASDGDNWADDSPLCHELLAKKILPVVRYYSYIEITRRAHQTLWREYEDLEEKFDNFAIQHIREPEDIYPVFRELFHKQTVDN</sequence>